<dbReference type="EMBL" id="Z35912">
    <property type="protein sequence ID" value="CAA84985.1"/>
    <property type="molecule type" value="Genomic_DNA"/>
</dbReference>
<dbReference type="EMBL" id="BK006936">
    <property type="protein sequence ID" value="DAA07163.2"/>
    <property type="molecule type" value="Genomic_DNA"/>
</dbReference>
<dbReference type="PIR" id="S45901">
    <property type="entry name" value="S45901"/>
</dbReference>
<dbReference type="RefSeq" id="NP_009599.2">
    <property type="nucleotide sequence ID" value="NM_001178391.2"/>
</dbReference>
<dbReference type="BioGRID" id="32744">
    <property type="interactions" value="71"/>
</dbReference>
<dbReference type="DIP" id="DIP-797N"/>
<dbReference type="FunCoup" id="P38227">
    <property type="interactions" value="47"/>
</dbReference>
<dbReference type="IntAct" id="P38227">
    <property type="interactions" value="5"/>
</dbReference>
<dbReference type="MINT" id="P38227"/>
<dbReference type="STRING" id="4932.YBR043C"/>
<dbReference type="TCDB" id="2.A.1.2.43">
    <property type="family name" value="the major facilitator superfamily (mfs)"/>
</dbReference>
<dbReference type="iPTMnet" id="P38227"/>
<dbReference type="PaxDb" id="4932-YBR043C"/>
<dbReference type="PeptideAtlas" id="P38227"/>
<dbReference type="EnsemblFungi" id="YBR043C_mRNA">
    <property type="protein sequence ID" value="YBR043C"/>
    <property type="gene ID" value="YBR043C"/>
</dbReference>
<dbReference type="GeneID" id="852331"/>
<dbReference type="KEGG" id="sce:YBR043C"/>
<dbReference type="AGR" id="SGD:S000000247"/>
<dbReference type="SGD" id="S000000247">
    <property type="gene designation" value="QDR3"/>
</dbReference>
<dbReference type="VEuPathDB" id="FungiDB:YBR043C"/>
<dbReference type="eggNOG" id="KOG0255">
    <property type="taxonomic scope" value="Eukaryota"/>
</dbReference>
<dbReference type="HOGENOM" id="CLU_008455_8_5_1"/>
<dbReference type="InParanoid" id="P38227"/>
<dbReference type="OMA" id="IFSMATT"/>
<dbReference type="OrthoDB" id="3936150at2759"/>
<dbReference type="BioCyc" id="YEAST:G3O-29016-MONOMER"/>
<dbReference type="BioGRID-ORCS" id="852331">
    <property type="hits" value="6 hits in 10 CRISPR screens"/>
</dbReference>
<dbReference type="PRO" id="PR:P38227"/>
<dbReference type="Proteomes" id="UP000002311">
    <property type="component" value="Chromosome II"/>
</dbReference>
<dbReference type="RNAct" id="P38227">
    <property type="molecule type" value="protein"/>
</dbReference>
<dbReference type="GO" id="GO:0071944">
    <property type="term" value="C:cell periphery"/>
    <property type="evidence" value="ECO:0007005"/>
    <property type="project" value="SGD"/>
</dbReference>
<dbReference type="GO" id="GO:0005886">
    <property type="term" value="C:plasma membrane"/>
    <property type="evidence" value="ECO:0000314"/>
    <property type="project" value="SGD"/>
</dbReference>
<dbReference type="GO" id="GO:0015562">
    <property type="term" value="F:efflux transmembrane transporter activity"/>
    <property type="evidence" value="ECO:0000315"/>
    <property type="project" value="SGD"/>
</dbReference>
<dbReference type="GO" id="GO:0015203">
    <property type="term" value="F:polyamine transmembrane transporter activity"/>
    <property type="evidence" value="ECO:0000315"/>
    <property type="project" value="SGD"/>
</dbReference>
<dbReference type="GO" id="GO:0015565">
    <property type="term" value="F:threonine efflux transmembrane transporter activity"/>
    <property type="evidence" value="ECO:0000315"/>
    <property type="project" value="SGD"/>
</dbReference>
<dbReference type="GO" id="GO:0032973">
    <property type="term" value="P:amino acid export across plasma membrane"/>
    <property type="evidence" value="ECO:0000315"/>
    <property type="project" value="SGD"/>
</dbReference>
<dbReference type="GO" id="GO:0030476">
    <property type="term" value="P:ascospore wall assembly"/>
    <property type="evidence" value="ECO:0000316"/>
    <property type="project" value="SGD"/>
</dbReference>
<dbReference type="GO" id="GO:0010509">
    <property type="term" value="P:intracellular polyamine homeostasis"/>
    <property type="evidence" value="ECO:0000315"/>
    <property type="project" value="SGD"/>
</dbReference>
<dbReference type="GO" id="GO:0055085">
    <property type="term" value="P:transmembrane transport"/>
    <property type="evidence" value="ECO:0000315"/>
    <property type="project" value="SGD"/>
</dbReference>
<dbReference type="CDD" id="cd17323">
    <property type="entry name" value="MFS_Tpo1_MDR_like"/>
    <property type="match status" value="1"/>
</dbReference>
<dbReference type="FunFam" id="1.20.1720.10:FF:000009">
    <property type="entry name" value="MFS multidrug transporter"/>
    <property type="match status" value="1"/>
</dbReference>
<dbReference type="FunFam" id="1.20.1250.20:FF:000773">
    <property type="entry name" value="Quinidine resistance"/>
    <property type="match status" value="1"/>
</dbReference>
<dbReference type="Gene3D" id="1.20.1250.20">
    <property type="entry name" value="MFS general substrate transporter like domains"/>
    <property type="match status" value="1"/>
</dbReference>
<dbReference type="Gene3D" id="1.20.1720.10">
    <property type="entry name" value="Multidrug resistance protein D"/>
    <property type="match status" value="1"/>
</dbReference>
<dbReference type="InterPro" id="IPR011701">
    <property type="entry name" value="MFS"/>
</dbReference>
<dbReference type="InterPro" id="IPR020846">
    <property type="entry name" value="MFS_dom"/>
</dbReference>
<dbReference type="InterPro" id="IPR036259">
    <property type="entry name" value="MFS_trans_sf"/>
</dbReference>
<dbReference type="PANTHER" id="PTHR23502">
    <property type="entry name" value="MAJOR FACILITATOR SUPERFAMILY"/>
    <property type="match status" value="1"/>
</dbReference>
<dbReference type="PANTHER" id="PTHR23502:SF5">
    <property type="entry name" value="QUINIDINE RESISTANCE PROTEIN 3"/>
    <property type="match status" value="1"/>
</dbReference>
<dbReference type="Pfam" id="PF07690">
    <property type="entry name" value="MFS_1"/>
    <property type="match status" value="1"/>
</dbReference>
<dbReference type="SUPFAM" id="SSF103473">
    <property type="entry name" value="MFS general substrate transporter"/>
    <property type="match status" value="1"/>
</dbReference>
<dbReference type="PROSITE" id="PS50850">
    <property type="entry name" value="MFS"/>
    <property type="match status" value="1"/>
</dbReference>
<sequence>MQAQGSQSNVGSLRSNCSDNSLPNNHVMMHCDESSGSPHSEHNDYSYEKTNLESTASNSREHRDNQLSRLKSEEYVVPKNQRRGLLPQLAIIPEFKDARDYPPMMKKMIVFLIAFSSMMGPMGTSIIFPAINSITTEFKTSVIMVNVSIGVYLLSLGVFPLWWSSLSELEGRRTTYITSFALLFAFNIGSALAPDINSFIALRMLCGAASASVQSVGAGTVADLYISEDRGKNLSYYYLGPLLAPLLSPIFGSLLVNRWPWRSTQWFMVILSGCNVILLTVLLPETLRKQDSKGAIAQILAERRIQVDNNERGEIQEDYQRGEDETDRIENQVATLSTEKHNYVGEVRDQDSLDLESHSSPNTYDGRAGETQLQRIYTEASRSLYEYQLDDSGIDATTAQVTRIRSTDPKLARSIRENSLRKLQTNLEEQVKKVLSSNGGEIAPKQVSAVRKVWDTFFVYFIKPLKSLHFLEYPPVALAITFSAISFSTVYFVNMTVEYKYSRPPYNFKPLYIGLLYIPNSVTYFFASIYGGRWVDMLLKRYKEKYGILAPEARISWNVVTSVISFPIALLIFGWCLDKKCHWVTPLIGTALFGYAAMMTIGATLSYLVDSLPGKGATGVALNNLIRQILAATAVFVTTPMLNGMGTGWAFTMLAFIVLGASSVLIILKKHGDYWRENYDLQKLYDKID</sequence>
<evidence type="ECO:0000255" key="1"/>
<evidence type="ECO:0000256" key="2">
    <source>
        <dbReference type="SAM" id="MobiDB-lite"/>
    </source>
</evidence>
<evidence type="ECO:0000269" key="3">
    <source>
    </source>
</evidence>
<evidence type="ECO:0000269" key="4">
    <source>
    </source>
</evidence>
<evidence type="ECO:0000269" key="5">
    <source>
    </source>
</evidence>
<evidence type="ECO:0000305" key="6"/>
<evidence type="ECO:0007744" key="7">
    <source>
    </source>
</evidence>
<accession>P38227</accession>
<accession>D6VQ43</accession>
<name>QDR3_YEAST</name>
<comment type="function">
    <text evidence="5">Multidrug resistance transporter involved in resistance and adaptation to quinidine and to the herbicide barban (4-chloro-2-butynyl [3-chlorophenyl] carbamate).</text>
</comment>
<comment type="subcellular location">
    <subcellularLocation>
        <location evidence="3 5">Cell membrane</location>
        <topology evidence="3 5">Multi-pass membrane protein</topology>
    </subcellularLocation>
</comment>
<comment type="miscellaneous">
    <text evidence="4">Present with 279 molecules/cell in log phase SD medium.</text>
</comment>
<comment type="similarity">
    <text evidence="6">Belongs to the major facilitator superfamily. CAR1 family.</text>
</comment>
<proteinExistence type="evidence at protein level"/>
<gene>
    <name type="primary">QDR3</name>
    <name type="synonym">AQR2</name>
    <name type="ordered locus">YBR043C</name>
    <name type="ORF">YBR0413</name>
</gene>
<protein>
    <recommendedName>
        <fullName>Quinidine resistance protein 3</fullName>
    </recommendedName>
    <alternativeName>
        <fullName>Acids quinidine resistance protein 2</fullName>
    </alternativeName>
</protein>
<feature type="chain" id="PRO_0000173437" description="Quinidine resistance protein 3">
    <location>
        <begin position="1"/>
        <end position="689"/>
    </location>
</feature>
<feature type="topological domain" description="Extracellular" evidence="1">
    <location>
        <begin position="1"/>
        <end position="108"/>
    </location>
</feature>
<feature type="transmembrane region" description="Helical" evidence="1">
    <location>
        <begin position="109"/>
        <end position="131"/>
    </location>
</feature>
<feature type="topological domain" description="Cytoplasmic" evidence="1">
    <location>
        <begin position="132"/>
        <end position="139"/>
    </location>
</feature>
<feature type="transmembrane region" description="Helical" evidence="1">
    <location>
        <begin position="140"/>
        <end position="163"/>
    </location>
</feature>
<feature type="topological domain" description="Extracellular" evidence="1">
    <location>
        <begin position="164"/>
        <end position="175"/>
    </location>
</feature>
<feature type="transmembrane region" description="Helical" evidence="1">
    <location>
        <begin position="176"/>
        <end position="193"/>
    </location>
</feature>
<feature type="topological domain" description="Cytoplasmic" evidence="1">
    <location>
        <begin position="194"/>
        <end position="235"/>
    </location>
</feature>
<feature type="transmembrane region" description="Helical" evidence="1">
    <location>
        <begin position="236"/>
        <end position="256"/>
    </location>
</feature>
<feature type="topological domain" description="Extracellular" evidence="1">
    <location>
        <begin position="257"/>
        <end position="265"/>
    </location>
</feature>
<feature type="transmembrane region" description="Helical" evidence="1">
    <location>
        <begin position="266"/>
        <end position="283"/>
    </location>
</feature>
<feature type="topological domain" description="Cytoplasmic" evidence="1">
    <location>
        <begin position="284"/>
        <end position="475"/>
    </location>
</feature>
<feature type="transmembrane region" description="Helical" evidence="1">
    <location>
        <begin position="476"/>
        <end position="493"/>
    </location>
</feature>
<feature type="topological domain" description="Extracellular" evidence="1">
    <location>
        <begin position="494"/>
        <end position="510"/>
    </location>
</feature>
<feature type="transmembrane region" description="Helical" evidence="1">
    <location>
        <begin position="511"/>
        <end position="532"/>
    </location>
</feature>
<feature type="topological domain" description="Cytoplasmic" evidence="1">
    <location>
        <begin position="533"/>
        <end position="558"/>
    </location>
</feature>
<feature type="transmembrane region" description="Helical" evidence="1">
    <location>
        <begin position="559"/>
        <end position="577"/>
    </location>
</feature>
<feature type="topological domain" description="Extracellular" evidence="1">
    <location>
        <begin position="578"/>
        <end position="586"/>
    </location>
</feature>
<feature type="transmembrane region" description="Helical" evidence="1">
    <location>
        <begin position="587"/>
        <end position="609"/>
    </location>
</feature>
<feature type="topological domain" description="Cytoplasmic" evidence="1">
    <location>
        <begin position="610"/>
        <end position="624"/>
    </location>
</feature>
<feature type="transmembrane region" description="Helical" evidence="1">
    <location>
        <begin position="625"/>
        <end position="642"/>
    </location>
</feature>
<feature type="topological domain" description="Extracellular" evidence="1">
    <location>
        <begin position="643"/>
        <end position="648"/>
    </location>
</feature>
<feature type="transmembrane region" description="Helical" evidence="1">
    <location>
        <begin position="649"/>
        <end position="668"/>
    </location>
</feature>
<feature type="topological domain" description="Cytoplasmic" evidence="1">
    <location>
        <begin position="669"/>
        <end position="689"/>
    </location>
</feature>
<feature type="region of interest" description="Disordered" evidence="2">
    <location>
        <begin position="1"/>
        <end position="73"/>
    </location>
</feature>
<feature type="compositionally biased region" description="Polar residues" evidence="2">
    <location>
        <begin position="1"/>
        <end position="24"/>
    </location>
</feature>
<feature type="compositionally biased region" description="Basic and acidic residues" evidence="2">
    <location>
        <begin position="29"/>
        <end position="51"/>
    </location>
</feature>
<feature type="compositionally biased region" description="Basic and acidic residues" evidence="2">
    <location>
        <begin position="59"/>
        <end position="73"/>
    </location>
</feature>
<feature type="modified residue" description="Phosphoserine" evidence="7">
    <location>
        <position position="436"/>
    </location>
</feature>
<feature type="sequence conflict" description="In Ref. 1; CAA84985." evidence="6" ref="1">
    <original>S</original>
    <variation>T</variation>
    <location>
        <position position="37"/>
    </location>
</feature>
<keyword id="KW-1003">Cell membrane</keyword>
<keyword id="KW-0472">Membrane</keyword>
<keyword id="KW-0597">Phosphoprotein</keyword>
<keyword id="KW-1185">Reference proteome</keyword>
<keyword id="KW-0812">Transmembrane</keyword>
<keyword id="KW-1133">Transmembrane helix</keyword>
<keyword id="KW-0813">Transport</keyword>
<organism>
    <name type="scientific">Saccharomyces cerevisiae (strain ATCC 204508 / S288c)</name>
    <name type="common">Baker's yeast</name>
    <dbReference type="NCBI Taxonomy" id="559292"/>
    <lineage>
        <taxon>Eukaryota</taxon>
        <taxon>Fungi</taxon>
        <taxon>Dikarya</taxon>
        <taxon>Ascomycota</taxon>
        <taxon>Saccharomycotina</taxon>
        <taxon>Saccharomycetes</taxon>
        <taxon>Saccharomycetales</taxon>
        <taxon>Saccharomycetaceae</taxon>
        <taxon>Saccharomyces</taxon>
    </lineage>
</organism>
<reference key="1">
    <citation type="journal article" date="1994" name="EMBO J.">
        <title>Complete DNA sequence of yeast chromosome II.</title>
        <authorList>
            <person name="Feldmann H."/>
            <person name="Aigle M."/>
            <person name="Aljinovic G."/>
            <person name="Andre B."/>
            <person name="Baclet M.C."/>
            <person name="Barthe C."/>
            <person name="Baur A."/>
            <person name="Becam A.-M."/>
            <person name="Biteau N."/>
            <person name="Boles E."/>
            <person name="Brandt T."/>
            <person name="Brendel M."/>
            <person name="Brueckner M."/>
            <person name="Bussereau F."/>
            <person name="Christiansen C."/>
            <person name="Contreras R."/>
            <person name="Crouzet M."/>
            <person name="Cziepluch C."/>
            <person name="Demolis N."/>
            <person name="Delaveau T."/>
            <person name="Doignon F."/>
            <person name="Domdey H."/>
            <person name="Duesterhus S."/>
            <person name="Dubois E."/>
            <person name="Dujon B."/>
            <person name="El Bakkoury M."/>
            <person name="Entian K.-D."/>
            <person name="Feuermann M."/>
            <person name="Fiers W."/>
            <person name="Fobo G.M."/>
            <person name="Fritz C."/>
            <person name="Gassenhuber J."/>
            <person name="Glansdorff N."/>
            <person name="Goffeau A."/>
            <person name="Grivell L.A."/>
            <person name="de Haan M."/>
            <person name="Hein C."/>
            <person name="Herbert C.J."/>
            <person name="Hollenberg C.P."/>
            <person name="Holmstroem K."/>
            <person name="Jacq C."/>
            <person name="Jacquet M."/>
            <person name="Jauniaux J.-C."/>
            <person name="Jonniaux J.-L."/>
            <person name="Kallesoee T."/>
            <person name="Kiesau P."/>
            <person name="Kirchrath L."/>
            <person name="Koetter P."/>
            <person name="Korol S."/>
            <person name="Liebl S."/>
            <person name="Logghe M."/>
            <person name="Lohan A.J.E."/>
            <person name="Louis E.J."/>
            <person name="Li Z.Y."/>
            <person name="Maat M.J."/>
            <person name="Mallet L."/>
            <person name="Mannhaupt G."/>
            <person name="Messenguy F."/>
            <person name="Miosga T."/>
            <person name="Molemans F."/>
            <person name="Mueller S."/>
            <person name="Nasr F."/>
            <person name="Obermaier B."/>
            <person name="Perea J."/>
            <person name="Pierard A."/>
            <person name="Piravandi E."/>
            <person name="Pohl F.M."/>
            <person name="Pohl T.M."/>
            <person name="Potier S."/>
            <person name="Proft M."/>
            <person name="Purnelle B."/>
            <person name="Ramezani Rad M."/>
            <person name="Rieger M."/>
            <person name="Rose M."/>
            <person name="Schaaff-Gerstenschlaeger I."/>
            <person name="Scherens B."/>
            <person name="Schwarzlose C."/>
            <person name="Skala J."/>
            <person name="Slonimski P.P."/>
            <person name="Smits P.H.M."/>
            <person name="Souciet J.-L."/>
            <person name="Steensma H.Y."/>
            <person name="Stucka R."/>
            <person name="Urrestarazu L.A."/>
            <person name="van der Aart Q.J.M."/>
            <person name="Van Dyck L."/>
            <person name="Vassarotti A."/>
            <person name="Vetter I."/>
            <person name="Vierendeels F."/>
            <person name="Vissers S."/>
            <person name="Wagner G."/>
            <person name="de Wergifosse P."/>
            <person name="Wolfe K.H."/>
            <person name="Zagulski M."/>
            <person name="Zimmermann F.K."/>
            <person name="Mewes H.-W."/>
            <person name="Kleine K."/>
        </authorList>
    </citation>
    <scope>NUCLEOTIDE SEQUENCE [LARGE SCALE GENOMIC DNA]</scope>
    <source>
        <strain>ATCC 204508 / S288c</strain>
    </source>
</reference>
<reference key="2">
    <citation type="journal article" date="2014" name="G3 (Bethesda)">
        <title>The reference genome sequence of Saccharomyces cerevisiae: Then and now.</title>
        <authorList>
            <person name="Engel S.R."/>
            <person name="Dietrich F.S."/>
            <person name="Fisk D.G."/>
            <person name="Binkley G."/>
            <person name="Balakrishnan R."/>
            <person name="Costanzo M.C."/>
            <person name="Dwight S.S."/>
            <person name="Hitz B.C."/>
            <person name="Karra K."/>
            <person name="Nash R.S."/>
            <person name="Weng S."/>
            <person name="Wong E.D."/>
            <person name="Lloyd P."/>
            <person name="Skrzypek M.S."/>
            <person name="Miyasato S.R."/>
            <person name="Simison M."/>
            <person name="Cherry J.M."/>
        </authorList>
    </citation>
    <scope>GENOME REANNOTATION</scope>
    <scope>SEQUENCE REVISION TO 37</scope>
    <source>
        <strain>ATCC 204508 / S288c</strain>
    </source>
</reference>
<reference key="3">
    <citation type="journal article" date="2003" name="Nature">
        <title>Global analysis of protein localization in budding yeast.</title>
        <authorList>
            <person name="Huh W.-K."/>
            <person name="Falvo J.V."/>
            <person name="Gerke L.C."/>
            <person name="Carroll A.S."/>
            <person name="Howson R.W."/>
            <person name="Weissman J.S."/>
            <person name="O'Shea E.K."/>
        </authorList>
    </citation>
    <scope>SUBCELLULAR LOCATION [LARGE SCALE ANALYSIS]</scope>
</reference>
<reference key="4">
    <citation type="journal article" date="2003" name="Nature">
        <title>Global analysis of protein expression in yeast.</title>
        <authorList>
            <person name="Ghaemmaghami S."/>
            <person name="Huh W.-K."/>
            <person name="Bower K."/>
            <person name="Howson R.W."/>
            <person name="Belle A."/>
            <person name="Dephoure N."/>
            <person name="O'Shea E.K."/>
            <person name="Weissman J.S."/>
        </authorList>
    </citation>
    <scope>LEVEL OF PROTEIN EXPRESSION [LARGE SCALE ANALYSIS]</scope>
</reference>
<reference key="5">
    <citation type="journal article" date="2005" name="Biochem. Biophys. Res. Commun.">
        <title>The yeast multidrug transporter Qdr3 (Ybr043c): localization and role as a determinant of resistance to quinidine, barban, cisplatin, and bleomycin.</title>
        <authorList>
            <person name="Tenreiro S."/>
            <person name="Vargas R.C."/>
            <person name="Teixeira M.C."/>
            <person name="Magnani C."/>
            <person name="Sa-Correia I."/>
        </authorList>
    </citation>
    <scope>FUNCTION</scope>
    <scope>SUBCELLULAR LOCATION</scope>
</reference>
<reference key="6">
    <citation type="journal article" date="2006" name="Proc. Natl. Acad. Sci. U.S.A.">
        <title>A global topology map of the Saccharomyces cerevisiae membrane proteome.</title>
        <authorList>
            <person name="Kim H."/>
            <person name="Melen K."/>
            <person name="Oesterberg M."/>
            <person name="von Heijne G."/>
        </authorList>
    </citation>
    <scope>TOPOLOGY [LARGE SCALE ANALYSIS]</scope>
    <source>
        <strain>ATCC 208353 / W303-1A</strain>
    </source>
</reference>
<reference key="7">
    <citation type="journal article" date="2008" name="Mol. Cell. Proteomics">
        <title>A multidimensional chromatography technology for in-depth phosphoproteome analysis.</title>
        <authorList>
            <person name="Albuquerque C.P."/>
            <person name="Smolka M.B."/>
            <person name="Payne S.H."/>
            <person name="Bafna V."/>
            <person name="Eng J."/>
            <person name="Zhou H."/>
        </authorList>
    </citation>
    <scope>IDENTIFICATION BY MASS SPECTROMETRY [LARGE SCALE ANALYSIS]</scope>
</reference>
<reference key="8">
    <citation type="journal article" date="2009" name="Science">
        <title>Global analysis of Cdk1 substrate phosphorylation sites provides insights into evolution.</title>
        <authorList>
            <person name="Holt L.J."/>
            <person name="Tuch B.B."/>
            <person name="Villen J."/>
            <person name="Johnson A.D."/>
            <person name="Gygi S.P."/>
            <person name="Morgan D.O."/>
        </authorList>
    </citation>
    <scope>PHOSPHORYLATION [LARGE SCALE ANALYSIS] AT SER-436</scope>
    <scope>IDENTIFICATION BY MASS SPECTROMETRY [LARGE SCALE ANALYSIS]</scope>
</reference>
<reference key="9">
    <citation type="journal article" date="2012" name="Proc. Natl. Acad. Sci. U.S.A.">
        <title>N-terminal acetylome analyses and functional insights of the N-terminal acetyltransferase NatB.</title>
        <authorList>
            <person name="Van Damme P."/>
            <person name="Lasa M."/>
            <person name="Polevoda B."/>
            <person name="Gazquez C."/>
            <person name="Elosegui-Artola A."/>
            <person name="Kim D.S."/>
            <person name="De Juan-Pardo E."/>
            <person name="Demeyer K."/>
            <person name="Hole K."/>
            <person name="Larrea E."/>
            <person name="Timmerman E."/>
            <person name="Prieto J."/>
            <person name="Arnesen T."/>
            <person name="Sherman F."/>
            <person name="Gevaert K."/>
            <person name="Aldabe R."/>
        </authorList>
    </citation>
    <scope>IDENTIFICATION BY MASS SPECTROMETRY [LARGE SCALE ANALYSIS]</scope>
</reference>